<reference key="1">
    <citation type="submission" date="2005-06" db="EMBL/GenBank/DDBJ databases">
        <title>DNA sequences of macaque genes expressed in brain or testis and its evolutionary implications.</title>
        <authorList>
            <consortium name="International consortium for macaque cDNA sequencing and analysis"/>
        </authorList>
    </citation>
    <scope>NUCLEOTIDE SEQUENCE [LARGE SCALE MRNA]</scope>
    <source>
        <tissue>Testis</tissue>
    </source>
</reference>
<name>LR2BP_MACFA</name>
<evidence type="ECO:0000250" key="1"/>
<keyword id="KW-0963">Cytoplasm</keyword>
<keyword id="KW-1185">Reference proteome</keyword>
<keyword id="KW-0677">Repeat</keyword>
<keyword id="KW-0802">TPR repeat</keyword>
<feature type="chain" id="PRO_0000315708" description="LRP2-binding protein">
    <location>
        <begin position="1"/>
        <end position="348"/>
    </location>
</feature>
<feature type="repeat" description="TPR">
    <location>
        <begin position="60"/>
        <end position="93"/>
    </location>
</feature>
<feature type="repeat" description="Sel1-like 1">
    <location>
        <begin position="94"/>
        <end position="126"/>
    </location>
</feature>
<feature type="repeat" description="Sel1-like 2">
    <location>
        <begin position="134"/>
        <end position="169"/>
    </location>
</feature>
<feature type="repeat" description="Sel1-like 3">
    <location>
        <begin position="174"/>
        <end position="207"/>
    </location>
</feature>
<feature type="repeat" description="Sel1-like 4">
    <location>
        <begin position="208"/>
        <end position="243"/>
    </location>
</feature>
<feature type="repeat" description="Sel1-like 5">
    <location>
        <begin position="244"/>
        <end position="278"/>
    </location>
</feature>
<feature type="repeat" description="Sel1-like 6">
    <location>
        <begin position="298"/>
        <end position="333"/>
    </location>
</feature>
<protein>
    <recommendedName>
        <fullName>LRP2-binding protein</fullName>
    </recommendedName>
</protein>
<sequence>MKLTSEKLPKNPFYASISQYAAKNQKSFQWEKEKTDHYSHANLVDKALQLLKKRILKGDTLAYFLRGQLYFEEGWYEEALEQFEEIEEKDHQATYQLGVMYYDGLGTILNSEKGVDYMKKILDSPCPKARHLKFAAAYNLGRAYYEGKGVKRSNEEAERLWLFAADNGNPKASVKAQSMLGLYYSTKEPKELEKAFYWHSEACGNGNLESQGALGLMYLYGQGIRQDTEAALHCLREAAERGNVYAQGNLVEYYYKMKFFTKCVAFSKRIADYDEVHDIPMIAQVTDCLPEFISRGMAMASFYHARCLQLGLGITRDEATAKHYYSKACRLNPALADELRSLLIRQRI</sequence>
<gene>
    <name type="primary">LRP2BP</name>
    <name type="ORF">QtsA-15783</name>
</gene>
<organism>
    <name type="scientific">Macaca fascicularis</name>
    <name type="common">Crab-eating macaque</name>
    <name type="synonym">Cynomolgus monkey</name>
    <dbReference type="NCBI Taxonomy" id="9541"/>
    <lineage>
        <taxon>Eukaryota</taxon>
        <taxon>Metazoa</taxon>
        <taxon>Chordata</taxon>
        <taxon>Craniata</taxon>
        <taxon>Vertebrata</taxon>
        <taxon>Euteleostomi</taxon>
        <taxon>Mammalia</taxon>
        <taxon>Eutheria</taxon>
        <taxon>Euarchontoglires</taxon>
        <taxon>Primates</taxon>
        <taxon>Haplorrhini</taxon>
        <taxon>Catarrhini</taxon>
        <taxon>Cercopithecidae</taxon>
        <taxon>Cercopithecinae</taxon>
        <taxon>Macaca</taxon>
    </lineage>
</organism>
<dbReference type="EMBL" id="AB179234">
    <property type="protein sequence ID" value="BAE02285.1"/>
    <property type="molecule type" value="mRNA"/>
</dbReference>
<dbReference type="RefSeq" id="NP_001272201.1">
    <property type="nucleotide sequence ID" value="NM_001285272.1"/>
</dbReference>
<dbReference type="SMR" id="Q4R3N2"/>
<dbReference type="STRING" id="9541.ENSMFAP00000033499"/>
<dbReference type="eggNOG" id="KOG1550">
    <property type="taxonomic scope" value="Eukaryota"/>
</dbReference>
<dbReference type="Proteomes" id="UP000233100">
    <property type="component" value="Unplaced"/>
</dbReference>
<dbReference type="GO" id="GO:0005737">
    <property type="term" value="C:cytoplasm"/>
    <property type="evidence" value="ECO:0007669"/>
    <property type="project" value="UniProtKB-SubCell"/>
</dbReference>
<dbReference type="Gene3D" id="1.25.40.10">
    <property type="entry name" value="Tetratricopeptide repeat domain"/>
    <property type="match status" value="1"/>
</dbReference>
<dbReference type="InterPro" id="IPR052323">
    <property type="entry name" value="LRP2-binding"/>
</dbReference>
<dbReference type="InterPro" id="IPR006597">
    <property type="entry name" value="Sel1-like"/>
</dbReference>
<dbReference type="InterPro" id="IPR011990">
    <property type="entry name" value="TPR-like_helical_dom_sf"/>
</dbReference>
<dbReference type="InterPro" id="IPR019734">
    <property type="entry name" value="TPR_rpt"/>
</dbReference>
<dbReference type="PANTHER" id="PTHR44554">
    <property type="entry name" value="LRP2-BINDING PROTEIN"/>
    <property type="match status" value="1"/>
</dbReference>
<dbReference type="PANTHER" id="PTHR44554:SF1">
    <property type="entry name" value="LRP2-BINDING PROTEIN"/>
    <property type="match status" value="1"/>
</dbReference>
<dbReference type="Pfam" id="PF08238">
    <property type="entry name" value="Sel1"/>
    <property type="match status" value="5"/>
</dbReference>
<dbReference type="SMART" id="SM00671">
    <property type="entry name" value="SEL1"/>
    <property type="match status" value="5"/>
</dbReference>
<dbReference type="SUPFAM" id="SSF81901">
    <property type="entry name" value="HCP-like"/>
    <property type="match status" value="1"/>
</dbReference>
<dbReference type="PROSITE" id="PS50005">
    <property type="entry name" value="TPR"/>
    <property type="match status" value="1"/>
</dbReference>
<dbReference type="PROSITE" id="PS50293">
    <property type="entry name" value="TPR_REGION"/>
    <property type="match status" value="1"/>
</dbReference>
<proteinExistence type="evidence at transcript level"/>
<comment type="function">
    <text evidence="1">May act as an adapter that regulates LRP2 function.</text>
</comment>
<comment type="subunit">
    <text evidence="1">Interacts with LRP2.</text>
</comment>
<comment type="subcellular location">
    <subcellularLocation>
        <location evidence="1">Cytoplasm</location>
    </subcellularLocation>
    <text evidence="1">Detected in a vesicular staining pattern close to the plasma membrane and throughout the cytoplasm.</text>
</comment>
<accession>Q4R3N2</accession>